<sequence>MLVTAYLAFVGLLASCLGLELSRCRAKPPGRACSNPSFLRFQLDFYQVYFLALAADWLQAPYLYKLYQHYYFLEGQIAILYVCGLASTVLFGLVASSLVDWLGRKNSCVLFSLTYSLCCLTKLSQDYFVLLVGRALGGLSTALLFSAFEAWYIHEHVERHDFPAEWIPATFARAAFWNHVLAVVAGVAAEAVASWIGLGPVAPFVAAIPLLALAGALALRNWGENYDRQRAFSRTCAGGLRCLLSDRRVLLLGTIQALFESVIFIFVFLWTPVLDPHGAPLGIIFSSFMAASLLGSSLYRIATSKRYHLQPMHLLSLAVLIVVFSLFMLTFSTSPGQESPVESFIAFLLIELACGLYFPSMSFLRRKVIPETEQAGVLNWFRVPLHSLACLGLLVLHDSDRKTGTRNMFSICSAVMVMALLAVVGLFTVVRHDAELRVPSPTEEPYAPEL</sequence>
<organism>
    <name type="scientific">Homo sapiens</name>
    <name type="common">Human</name>
    <dbReference type="NCBI Taxonomy" id="9606"/>
    <lineage>
        <taxon>Eukaryota</taxon>
        <taxon>Metazoa</taxon>
        <taxon>Chordata</taxon>
        <taxon>Craniata</taxon>
        <taxon>Vertebrata</taxon>
        <taxon>Euteleostomi</taxon>
        <taxon>Mammalia</taxon>
        <taxon>Eutheria</taxon>
        <taxon>Euarchontoglires</taxon>
        <taxon>Primates</taxon>
        <taxon>Haplorrhini</taxon>
        <taxon>Catarrhini</taxon>
        <taxon>Hominidae</taxon>
        <taxon>Homo</taxon>
    </lineage>
</organism>
<feature type="chain" id="PRO_0000273401" description="Molybdate-anion transporter">
    <location>
        <begin position="1"/>
        <end position="450"/>
    </location>
</feature>
<feature type="transmembrane region" description="Helical" evidence="1">
    <location>
        <begin position="1"/>
        <end position="21"/>
    </location>
</feature>
<feature type="transmembrane region" description="Helical" evidence="1">
    <location>
        <begin position="43"/>
        <end position="63"/>
    </location>
</feature>
<feature type="transmembrane region" description="Helical" evidence="1">
    <location>
        <begin position="79"/>
        <end position="99"/>
    </location>
</feature>
<feature type="transmembrane region" description="Helical" evidence="1">
    <location>
        <begin position="128"/>
        <end position="148"/>
    </location>
</feature>
<feature type="transmembrane region" description="Helical" evidence="1">
    <location>
        <begin position="174"/>
        <end position="194"/>
    </location>
</feature>
<feature type="transmembrane region" description="Helical" evidence="1">
    <location>
        <begin position="195"/>
        <end position="215"/>
    </location>
</feature>
<feature type="transmembrane region" description="Helical" evidence="1">
    <location>
        <begin position="249"/>
        <end position="269"/>
    </location>
</feature>
<feature type="transmembrane region" description="Helical" evidence="1">
    <location>
        <begin position="278"/>
        <end position="298"/>
    </location>
</feature>
<feature type="transmembrane region" description="Helical" evidence="1">
    <location>
        <begin position="311"/>
        <end position="331"/>
    </location>
</feature>
<feature type="transmembrane region" description="Helical" evidence="1">
    <location>
        <begin position="344"/>
        <end position="364"/>
    </location>
</feature>
<feature type="transmembrane region" description="Helical" evidence="1">
    <location>
        <begin position="376"/>
        <end position="396"/>
    </location>
</feature>
<feature type="transmembrane region" description="Helical" evidence="1">
    <location>
        <begin position="409"/>
        <end position="429"/>
    </location>
</feature>
<feature type="splice variant" id="VSP_046647" description="In isoform 2." evidence="4">
    <original>M</original>
    <variation>MEVTAVGEEANQGDLLGFGQRCCSLGSSNPWLYRTAGIFPEHCTEEKKIGTYFRVAPQASKSQRSRCHGMAASEARPGEATAASYGRPFPTHPRRQEFRARVVRGPTM</variation>
    <location>
        <position position="1"/>
    </location>
</feature>
<feature type="sequence conflict" description="In Ref. 5; AAH67795." evidence="4" ref="5">
    <original>L</original>
    <variation>M</variation>
    <location>
        <position position="130"/>
    </location>
</feature>
<feature type="sequence conflict" description="In Ref. 4; BAC11137." evidence="4" ref="4">
    <original>V</original>
    <variation>A</variation>
    <location>
        <position position="157"/>
    </location>
</feature>
<feature type="sequence conflict" description="In Ref. 2; CAE45795." evidence="4" ref="2">
    <original>G</original>
    <variation>E</variation>
    <location>
        <position position="425"/>
    </location>
</feature>
<protein>
    <recommendedName>
        <fullName>Molybdate-anion transporter</fullName>
    </recommendedName>
    <alternativeName>
        <fullName>Major facilitator superfamily domain-containing protein 5</fullName>
    </alternativeName>
    <alternativeName>
        <fullName>Molybdate transporter 2 homolog</fullName>
        <shortName>hsMOT2</shortName>
    </alternativeName>
</protein>
<keyword id="KW-0025">Alternative splicing</keyword>
<keyword id="KW-1003">Cell membrane</keyword>
<keyword id="KW-0406">Ion transport</keyword>
<keyword id="KW-0472">Membrane</keyword>
<keyword id="KW-1267">Proteomics identification</keyword>
<keyword id="KW-1185">Reference proteome</keyword>
<keyword id="KW-0812">Transmembrane</keyword>
<keyword id="KW-1133">Transmembrane helix</keyword>
<keyword id="KW-0813">Transport</keyword>
<comment type="function">
    <text evidence="3">Mediates high-affinity intracellular uptake of the rare oligo-element molybdenum.</text>
</comment>
<comment type="biophysicochemical properties">
    <kinetics>
        <KM evidence="3">546 nM for molybdate (when expressed in yeast)</KM>
    </kinetics>
</comment>
<comment type="interaction">
    <interactant intactId="EBI-3920969">
        <id>Q6N075</id>
    </interactant>
    <interactant intactId="EBI-11277970">
        <id>Q9UHX3</id>
        <label>ADGRE2</label>
    </interactant>
    <organismsDiffer>false</organismsDiffer>
    <experiments>3</experiments>
</comment>
<comment type="interaction">
    <interactant intactId="EBI-3920969">
        <id>Q6N075</id>
    </interactant>
    <interactant intactId="EBI-13059134">
        <id>Q13520</id>
        <label>AQP6</label>
    </interactant>
    <organismsDiffer>false</organismsDiffer>
    <experiments>3</experiments>
</comment>
<comment type="interaction">
    <interactant intactId="EBI-3920969">
        <id>Q6N075</id>
    </interactant>
    <interactant intactId="EBI-714543">
        <id>Q15041</id>
        <label>ARL6IP1</label>
    </interactant>
    <organismsDiffer>false</organismsDiffer>
    <experiments>3</experiments>
</comment>
<comment type="interaction">
    <interactant intactId="EBI-3920969">
        <id>Q6N075</id>
    </interactant>
    <interactant intactId="EBI-19947314">
        <id>Q8NFU1</id>
        <label>BEST2</label>
    </interactant>
    <organismsDiffer>false</organismsDiffer>
    <experiments>3</experiments>
</comment>
<comment type="interaction">
    <interactant intactId="EBI-3920969">
        <id>Q6N075</id>
    </interactant>
    <interactant intactId="EBI-3895726">
        <id>P62952</id>
        <label>BLCAP</label>
    </interactant>
    <organismsDiffer>false</organismsDiffer>
    <experiments>3</experiments>
</comment>
<comment type="interaction">
    <interactant intactId="EBI-3920969">
        <id>Q6N075</id>
    </interactant>
    <interactant intactId="EBI-17953245">
        <id>Q6UXG8-3</id>
        <label>BTNL9</label>
    </interactant>
    <organismsDiffer>false</organismsDiffer>
    <experiments>3</experiments>
</comment>
<comment type="interaction">
    <interactant intactId="EBI-3920969">
        <id>Q6N075</id>
    </interactant>
    <interactant intactId="EBI-12822627">
        <id>O14523</id>
        <label>C2CD2L</label>
    </interactant>
    <organismsDiffer>false</organismsDiffer>
    <experiments>3</experiments>
</comment>
<comment type="interaction">
    <interactant intactId="EBI-3920969">
        <id>Q6N075</id>
    </interactant>
    <interactant intactId="EBI-19051169">
        <id>Q8N350-4</id>
        <label>CBARP</label>
    </interactant>
    <organismsDiffer>false</organismsDiffer>
    <experiments>3</experiments>
</comment>
<comment type="interaction">
    <interactant intactId="EBI-3920969">
        <id>Q6N075</id>
    </interactant>
    <interactant intactId="EBI-10271156">
        <id>Q8NHW4</id>
        <label>CCL4L2</label>
    </interactant>
    <organismsDiffer>false</organismsDiffer>
    <experiments>3</experiments>
</comment>
<comment type="interaction">
    <interactant intactId="EBI-3920969">
        <id>Q6N075</id>
    </interactant>
    <interactant intactId="EBI-525714">
        <id>P25942</id>
        <label>CD40</label>
    </interactant>
    <organismsDiffer>false</organismsDiffer>
    <experiments>3</experiments>
</comment>
<comment type="interaction">
    <interactant intactId="EBI-3920969">
        <id>Q6N075</id>
    </interactant>
    <interactant intactId="EBI-7797864">
        <id>P11912</id>
        <label>CD79A</label>
    </interactant>
    <organismsDiffer>false</organismsDiffer>
    <experiments>3</experiments>
</comment>
<comment type="interaction">
    <interactant intactId="EBI-3920969">
        <id>Q6N075</id>
    </interactant>
    <interactant intactId="EBI-740744">
        <id>O95471</id>
        <label>CLDN7</label>
    </interactant>
    <organismsDiffer>false</organismsDiffer>
    <experiments>3</experiments>
</comment>
<comment type="interaction">
    <interactant intactId="EBI-3920969">
        <id>Q6N075</id>
    </interactant>
    <interactant intactId="EBI-17274839">
        <id>P58418</id>
        <label>CLRN1</label>
    </interactant>
    <organismsDiffer>false</organismsDiffer>
    <experiments>3</experiments>
</comment>
<comment type="interaction">
    <interactant intactId="EBI-3920969">
        <id>Q6N075</id>
    </interactant>
    <interactant intactId="EBI-6942903">
        <id>Q96BA8</id>
        <label>CREB3L1</label>
    </interactant>
    <organismsDiffer>false</organismsDiffer>
    <experiments>6</experiments>
</comment>
<comment type="interaction">
    <interactant intactId="EBI-3920969">
        <id>Q6N075</id>
    </interactant>
    <interactant intactId="EBI-1058710">
        <id>O43169</id>
        <label>CYB5B</label>
    </interactant>
    <organismsDiffer>false</organismsDiffer>
    <experiments>3</experiments>
</comment>
<comment type="interaction">
    <interactant intactId="EBI-3920969">
        <id>Q6N075</id>
    </interactant>
    <interactant intactId="EBI-2833872">
        <id>O15552</id>
        <label>FFAR2</label>
    </interactant>
    <organismsDiffer>false</organismsDiffer>
    <experiments>3</experiments>
</comment>
<comment type="interaction">
    <interactant intactId="EBI-3920969">
        <id>Q6N075</id>
    </interactant>
    <interactant intactId="EBI-12175685">
        <id>Q14802-3</id>
        <label>FXYD3</label>
    </interactant>
    <organismsDiffer>false</organismsDiffer>
    <experiments>3</experiments>
</comment>
<comment type="interaction">
    <interactant intactId="EBI-3920969">
        <id>Q6N075</id>
    </interactant>
    <interactant intactId="EBI-1057431">
        <id>O14556</id>
        <label>GAPDHS</label>
    </interactant>
    <organismsDiffer>false</organismsDiffer>
    <experiments>2</experiments>
</comment>
<comment type="interaction">
    <interactant intactId="EBI-3920969">
        <id>Q6N075</id>
    </interactant>
    <interactant intactId="EBI-750433">
        <id>P36382</id>
        <label>GJA5</label>
    </interactant>
    <organismsDiffer>false</organismsDiffer>
    <experiments>3</experiments>
</comment>
<comment type="interaction">
    <interactant intactId="EBI-3920969">
        <id>Q6N075</id>
    </interactant>
    <interactant intactId="EBI-4401517">
        <id>O14653</id>
        <label>GOSR2</label>
    </interactant>
    <organismsDiffer>false</organismsDiffer>
    <experiments>3</experiments>
</comment>
<comment type="interaction">
    <interactant intactId="EBI-3920969">
        <id>Q6N075</id>
    </interactant>
    <interactant intactId="EBI-17935713">
        <id>Q96P66</id>
        <label>GPR101</label>
    </interactant>
    <organismsDiffer>false</organismsDiffer>
    <experiments>3</experiments>
</comment>
<comment type="interaction">
    <interactant intactId="EBI-3920969">
        <id>Q6N075</id>
    </interactant>
    <interactant intactId="EBI-13345167">
        <id>Q8TDT2</id>
        <label>GPR152</label>
    </interactant>
    <organismsDiffer>false</organismsDiffer>
    <experiments>3</experiments>
</comment>
<comment type="interaction">
    <interactant intactId="EBI-3920969">
        <id>Q6N075</id>
    </interactant>
    <interactant intactId="EBI-10178951">
        <id>O00155</id>
        <label>GPR25</label>
    </interactant>
    <organismsDiffer>false</organismsDiffer>
    <experiments>3</experiments>
</comment>
<comment type="interaction">
    <interactant intactId="EBI-3920969">
        <id>Q6N075</id>
    </interactant>
    <interactant intactId="EBI-18076404">
        <id>O15529</id>
        <label>GPR42</label>
    </interactant>
    <organismsDiffer>false</organismsDiffer>
    <experiments>3</experiments>
</comment>
<comment type="interaction">
    <interactant intactId="EBI-3920969">
        <id>Q6N075</id>
    </interactant>
    <interactant intactId="EBI-11721746">
        <id>Q8TED1</id>
        <label>GPX8</label>
    </interactant>
    <organismsDiffer>false</organismsDiffer>
    <experiments>3</experiments>
</comment>
<comment type="interaction">
    <interactant intactId="EBI-3920969">
        <id>Q6N075</id>
    </interactant>
    <interactant intactId="EBI-18053395">
        <id>Q7Z5P4</id>
        <label>HSD17B13</label>
    </interactant>
    <organismsDiffer>false</organismsDiffer>
    <experiments>3</experiments>
</comment>
<comment type="interaction">
    <interactant intactId="EBI-3920969">
        <id>Q6N075</id>
    </interactant>
    <interactant intactId="EBI-720480">
        <id>P24593</id>
        <label>IGFBP5</label>
    </interactant>
    <organismsDiffer>false</organismsDiffer>
    <experiments>3</experiments>
</comment>
<comment type="interaction">
    <interactant intactId="EBI-3920969">
        <id>Q6N075</id>
    </interactant>
    <interactant intactId="EBI-19045531">
        <id>Q6UWB1</id>
        <label>IL27RA</label>
    </interactant>
    <organismsDiffer>false</organismsDiffer>
    <experiments>3</experiments>
</comment>
<comment type="interaction">
    <interactant intactId="EBI-3920969">
        <id>Q6N075</id>
    </interactant>
    <interactant intactId="EBI-749265">
        <id>Q8N6L0</id>
        <label>KASH5</label>
    </interactant>
    <organismsDiffer>false</organismsDiffer>
    <experiments>3</experiments>
</comment>
<comment type="interaction">
    <interactant intactId="EBI-3920969">
        <id>Q6N075</id>
    </interactant>
    <interactant intactId="EBI-8070286">
        <id>O43561-2</id>
        <label>LAT</label>
    </interactant>
    <organismsDiffer>false</organismsDiffer>
    <experiments>3</experiments>
</comment>
<comment type="interaction">
    <interactant intactId="EBI-3920969">
        <id>Q6N075</id>
    </interactant>
    <interactant intactId="EBI-2820517">
        <id>Q8TAF8</id>
        <label>LHFPL5</label>
    </interactant>
    <organismsDiffer>false</organismsDiffer>
    <experiments>3</experiments>
</comment>
<comment type="interaction">
    <interactant intactId="EBI-3920969">
        <id>Q6N075</id>
    </interactant>
    <interactant intactId="EBI-6163737">
        <id>Q8N4V1</id>
        <label>MMGT1</label>
    </interactant>
    <organismsDiffer>false</organismsDiffer>
    <experiments>3</experiments>
</comment>
<comment type="interaction">
    <interactant intactId="EBI-3920969">
        <id>Q6N075</id>
    </interactant>
    <interactant intactId="EBI-17263240">
        <id>P15941-11</id>
        <label>MUC1</label>
    </interactant>
    <organismsDiffer>false</organismsDiffer>
    <experiments>3</experiments>
</comment>
<comment type="interaction">
    <interactant intactId="EBI-3920969">
        <id>Q6N075</id>
    </interactant>
    <interactant intactId="EBI-1050125">
        <id>O15173</id>
        <label>PGRMC2</label>
    </interactant>
    <organismsDiffer>false</organismsDiffer>
    <experiments>3</experiments>
</comment>
<comment type="interaction">
    <interactant intactId="EBI-3920969">
        <id>Q6N075</id>
    </interactant>
    <interactant intactId="EBI-12257782">
        <id>Q99640-2</id>
        <label>PKMYT1</label>
    </interactant>
    <organismsDiffer>false</organismsDiffer>
    <experiments>3</experiments>
</comment>
<comment type="interaction">
    <interactant intactId="EBI-3920969">
        <id>Q6N075</id>
    </interactant>
    <interactant intactId="EBI-692836">
        <id>P26678</id>
        <label>PLN</label>
    </interactant>
    <organismsDiffer>false</organismsDiffer>
    <experiments>3</experiments>
</comment>
<comment type="interaction">
    <interactant intactId="EBI-3920969">
        <id>Q6N075</id>
    </interactant>
    <interactant intactId="EBI-2340657">
        <id>P50876</id>
        <label>RNF144A</label>
    </interactant>
    <organismsDiffer>false</organismsDiffer>
    <experiments>3</experiments>
</comment>
<comment type="interaction">
    <interactant intactId="EBI-3920969">
        <id>Q6N075</id>
    </interactant>
    <interactant intactId="EBI-2466594">
        <id>Q6ZMZ0</id>
        <label>RNF19B</label>
    </interactant>
    <organismsDiffer>false</organismsDiffer>
    <experiments>3</experiments>
</comment>
<comment type="interaction">
    <interactant intactId="EBI-3920969">
        <id>Q6N075</id>
    </interactant>
    <interactant intactId="EBI-10244780">
        <id>Q5QGT7</id>
        <label>RTP2</label>
    </interactant>
    <organismsDiffer>false</organismsDiffer>
    <experiments>3</experiments>
</comment>
<comment type="interaction">
    <interactant intactId="EBI-3920969">
        <id>Q6N075</id>
    </interactant>
    <interactant intactId="EBI-17247926">
        <id>Q9NY72</id>
        <label>SCN3B</label>
    </interactant>
    <organismsDiffer>false</organismsDiffer>
    <experiments>3</experiments>
</comment>
<comment type="interaction">
    <interactant intactId="EBI-3920969">
        <id>Q6N075</id>
    </interactant>
    <interactant intactId="EBI-1058865">
        <id>O75396</id>
        <label>SEC22B</label>
    </interactant>
    <organismsDiffer>false</organismsDiffer>
    <experiments>3</experiments>
</comment>
<comment type="interaction">
    <interactant intactId="EBI-3920969">
        <id>Q6N075</id>
    </interactant>
    <interactant intactId="EBI-18037857">
        <id>Q3SXP7</id>
        <label>SHISAL1</label>
    </interactant>
    <organismsDiffer>false</organismsDiffer>
    <experiments>3</experiments>
</comment>
<comment type="interaction">
    <interactant intactId="EBI-3920969">
        <id>Q6N075</id>
    </interactant>
    <interactant intactId="EBI-18159983">
        <id>Q3KNW5</id>
        <label>SLC10A6</label>
    </interactant>
    <organismsDiffer>false</organismsDiffer>
    <experiments>3</experiments>
</comment>
<comment type="interaction">
    <interactant intactId="EBI-3920969">
        <id>Q6N075</id>
    </interactant>
    <interactant intactId="EBI-18036244">
        <id>Q05940</id>
        <label>SLC18A2</label>
    </interactant>
    <organismsDiffer>false</organismsDiffer>
    <experiments>3</experiments>
</comment>
<comment type="interaction">
    <interactant intactId="EBI-3920969">
        <id>Q6N075</id>
    </interactant>
    <interactant intactId="EBI-2823239">
        <id>Q9NUM3</id>
        <label>SLC39A9</label>
    </interactant>
    <organismsDiffer>false</organismsDiffer>
    <experiments>3</experiments>
</comment>
<comment type="interaction">
    <interactant intactId="EBI-3920969">
        <id>Q6N075</id>
    </interactant>
    <interactant intactId="EBI-17280858">
        <id>Q8WWF3</id>
        <label>SSMEM1</label>
    </interactant>
    <organismsDiffer>false</organismsDiffer>
    <experiments>3</experiments>
</comment>
<comment type="interaction">
    <interactant intactId="EBI-3920969">
        <id>Q6N075</id>
    </interactant>
    <interactant intactId="EBI-738687">
        <id>P02808</id>
        <label>STATH</label>
    </interactant>
    <organismsDiffer>false</organismsDiffer>
    <experiments>3</experiments>
</comment>
<comment type="interaction">
    <interactant intactId="EBI-3920969">
        <id>Q6N075</id>
    </interactant>
    <interactant intactId="EBI-18271435">
        <id>Q0VAB0</id>
        <label>TBXA2R</label>
    </interactant>
    <organismsDiffer>false</organismsDiffer>
    <experiments>3</experiments>
</comment>
<comment type="interaction">
    <interactant intactId="EBI-3920969">
        <id>Q6N075</id>
    </interactant>
    <interactant intactId="EBI-6268651">
        <id>Q9NPL8</id>
        <label>TIMMDC1</label>
    </interactant>
    <organismsDiffer>false</organismsDiffer>
    <experiments>3</experiments>
</comment>
<comment type="interaction">
    <interactant intactId="EBI-3920969">
        <id>Q6N075</id>
    </interactant>
    <interactant intactId="EBI-10694905">
        <id>Q5BJH2-2</id>
        <label>TMEM128</label>
    </interactant>
    <organismsDiffer>false</organismsDiffer>
    <experiments>3</experiments>
</comment>
<comment type="interaction">
    <interactant intactId="EBI-3920969">
        <id>Q6N075</id>
    </interactant>
    <interactant intactId="EBI-19763514">
        <id>Q8N3G9</id>
        <label>TMEM130</label>
    </interactant>
    <organismsDiffer>false</organismsDiffer>
    <experiments>3</experiments>
</comment>
<comment type="interaction">
    <interactant intactId="EBI-3920969">
        <id>Q6N075</id>
    </interactant>
    <interactant intactId="EBI-8638294">
        <id>Q9NUH8</id>
        <label>TMEM14B</label>
    </interactant>
    <organismsDiffer>false</organismsDiffer>
    <experiments>3</experiments>
</comment>
<comment type="interaction">
    <interactant intactId="EBI-3920969">
        <id>Q6N075</id>
    </interactant>
    <interactant intactId="EBI-11724423">
        <id>Q7Z7N9</id>
        <label>TMEM179B</label>
    </interactant>
    <organismsDiffer>false</organismsDiffer>
    <experiments>3</experiments>
</comment>
<comment type="interaction">
    <interactant intactId="EBI-3920969">
        <id>Q6N075</id>
    </interactant>
    <interactant intactId="EBI-12274070">
        <id>Q969S6</id>
        <label>TMEM203</label>
    </interactant>
    <organismsDiffer>false</organismsDiffer>
    <experiments>3</experiments>
</comment>
<comment type="interaction">
    <interactant intactId="EBI-3920969">
        <id>Q6N075</id>
    </interactant>
    <interactant intactId="EBI-10982110">
        <id>Q96Q45-2</id>
        <label>TMEM237</label>
    </interactant>
    <organismsDiffer>false</organismsDiffer>
    <experiments>3</experiments>
</comment>
<comment type="interaction">
    <interactant intactId="EBI-3920969">
        <id>Q6N075</id>
    </interactant>
    <interactant intactId="EBI-751210">
        <id>Q96EC8</id>
        <label>YIPF6</label>
    </interactant>
    <organismsDiffer>false</organismsDiffer>
    <experiments>3</experiments>
</comment>
<comment type="subcellular location">
    <subcellularLocation>
        <location evidence="4">Cell membrane</location>
        <topology evidence="4">Multi-pass membrane protein</topology>
    </subcellularLocation>
</comment>
<comment type="alternative products">
    <event type="alternative splicing"/>
    <isoform>
        <id>Q6N075-1</id>
        <name>1</name>
        <sequence type="displayed"/>
    </isoform>
    <isoform>
        <id>Q6N075-2</id>
        <name>2</name>
        <sequence type="described" ref="VSP_046647"/>
    </isoform>
</comment>
<comment type="tissue specificity">
    <text evidence="2">Expressed ubiquitously but at relatively higher levels in the olfactory bulb and the skeletal muscle.</text>
</comment>
<comment type="similarity">
    <text evidence="4">Belongs to the major facilitator superfamily.</text>
</comment>
<comment type="sequence caution" evidence="4">
    <conflict type="miscellaneous discrepancy">
        <sequence resource="EMBL-CDS" id="BAC05108"/>
    </conflict>
    <text>Probable cloning artifact.</text>
</comment>
<comment type="sequence caution" evidence="4">
    <conflict type="erroneous initiation">
        <sequence resource="EMBL-CDS" id="CAE45795"/>
    </conflict>
    <text>Extended N-terminus.</text>
</comment>
<evidence type="ECO:0000255" key="1"/>
<evidence type="ECO:0000269" key="2">
    <source>
    </source>
</evidence>
<evidence type="ECO:0000269" key="3">
    <source>
    </source>
</evidence>
<evidence type="ECO:0000305" key="4"/>
<accession>Q6N075</accession>
<accession>G3V1N7</accession>
<accession>Q6NW04</accession>
<accession>Q8N7W8</accession>
<accession>Q8NCK0</accession>
<accession>Q96IA5</accession>
<dbReference type="EMBL" id="AY358604">
    <property type="protein sequence ID" value="AAQ88967.1"/>
    <property type="molecule type" value="mRNA"/>
</dbReference>
<dbReference type="EMBL" id="BX640649">
    <property type="protein sequence ID" value="CAE45795.1"/>
    <property type="status" value="ALT_INIT"/>
    <property type="molecule type" value="mRNA"/>
</dbReference>
<dbReference type="EMBL" id="AK097576">
    <property type="protein sequence ID" value="BAC05108.1"/>
    <property type="status" value="ALT_SEQ"/>
    <property type="molecule type" value="mRNA"/>
</dbReference>
<dbReference type="EMBL" id="AK074684">
    <property type="protein sequence ID" value="BAC11137.1"/>
    <property type="molecule type" value="mRNA"/>
</dbReference>
<dbReference type="EMBL" id="AC021072">
    <property type="status" value="NOT_ANNOTATED_CDS"/>
    <property type="molecule type" value="Genomic_DNA"/>
</dbReference>
<dbReference type="EMBL" id="CH471054">
    <property type="protein sequence ID" value="EAW96679.1"/>
    <property type="molecule type" value="Genomic_DNA"/>
</dbReference>
<dbReference type="EMBL" id="BC007703">
    <property type="protein sequence ID" value="AAH07703.1"/>
    <property type="molecule type" value="mRNA"/>
</dbReference>
<dbReference type="EMBL" id="BC067795">
    <property type="protein sequence ID" value="AAH67795.1"/>
    <property type="molecule type" value="mRNA"/>
</dbReference>
<dbReference type="CCDS" id="CCDS53796.1">
    <molecule id="Q6N075-2"/>
</dbReference>
<dbReference type="CCDS" id="CCDS8851.1">
    <molecule id="Q6N075-1"/>
</dbReference>
<dbReference type="RefSeq" id="NP_001164261.1">
    <molecule id="Q6N075-2"/>
    <property type="nucleotide sequence ID" value="NM_001170790.2"/>
</dbReference>
<dbReference type="RefSeq" id="NP_116278.3">
    <molecule id="Q6N075-1"/>
    <property type="nucleotide sequence ID" value="NM_032889.4"/>
</dbReference>
<dbReference type="RefSeq" id="XP_005269254.1">
    <molecule id="Q6N075-2"/>
    <property type="nucleotide sequence ID" value="XM_005269197.2"/>
</dbReference>
<dbReference type="RefSeq" id="XP_005269255.1">
    <molecule id="Q6N075-1"/>
    <property type="nucleotide sequence ID" value="XM_005269198.5"/>
</dbReference>
<dbReference type="RefSeq" id="XP_054229620.1">
    <molecule id="Q6N075-2"/>
    <property type="nucleotide sequence ID" value="XM_054373645.1"/>
</dbReference>
<dbReference type="RefSeq" id="XP_054229621.1">
    <molecule id="Q6N075-1"/>
    <property type="nucleotide sequence ID" value="XM_054373646.1"/>
</dbReference>
<dbReference type="SMR" id="Q6N075"/>
<dbReference type="BioGRID" id="124404">
    <property type="interactions" value="87"/>
</dbReference>
<dbReference type="FunCoup" id="Q6N075">
    <property type="interactions" value="565"/>
</dbReference>
<dbReference type="IntAct" id="Q6N075">
    <property type="interactions" value="80"/>
</dbReference>
<dbReference type="MINT" id="Q6N075"/>
<dbReference type="STRING" id="9606.ENSP00000442688"/>
<dbReference type="TCDB" id="2.A.1.40.2">
    <property type="family name" value="the major facilitator superfamily (mfs)"/>
</dbReference>
<dbReference type="GlyGen" id="Q6N075">
    <property type="glycosylation" value="2 sites, 1 O-linked glycan (2 sites)"/>
</dbReference>
<dbReference type="iPTMnet" id="Q6N075"/>
<dbReference type="PhosphoSitePlus" id="Q6N075"/>
<dbReference type="SwissPalm" id="Q6N075"/>
<dbReference type="BioMuta" id="MFSD5"/>
<dbReference type="DMDM" id="124015161"/>
<dbReference type="jPOST" id="Q6N075"/>
<dbReference type="MassIVE" id="Q6N075"/>
<dbReference type="PaxDb" id="9606-ENSP00000442688"/>
<dbReference type="PeptideAtlas" id="Q6N075"/>
<dbReference type="ProteomicsDB" id="32391"/>
<dbReference type="ProteomicsDB" id="66618">
    <molecule id="Q6N075-1"/>
</dbReference>
<dbReference type="ProteomicsDB" id="66619">
    <molecule id="Q6N075-2"/>
</dbReference>
<dbReference type="Pumba" id="Q6N075"/>
<dbReference type="Antibodypedia" id="48343">
    <property type="antibodies" value="81 antibodies from 13 providers"/>
</dbReference>
<dbReference type="DNASU" id="84975"/>
<dbReference type="Ensembl" id="ENST00000329548.5">
    <molecule id="Q6N075-1"/>
    <property type="protein sequence ID" value="ENSP00000332624.5"/>
    <property type="gene ID" value="ENSG00000182544.9"/>
</dbReference>
<dbReference type="Ensembl" id="ENST00000534842.1">
    <molecule id="Q6N075-2"/>
    <property type="protein sequence ID" value="ENSP00000442688.1"/>
    <property type="gene ID" value="ENSG00000182544.9"/>
</dbReference>
<dbReference type="GeneID" id="84975"/>
<dbReference type="KEGG" id="hsa:84975"/>
<dbReference type="MANE-Select" id="ENST00000329548.5">
    <property type="protein sequence ID" value="ENSP00000332624.5"/>
    <property type="RefSeq nucleotide sequence ID" value="NM_032889.5"/>
    <property type="RefSeq protein sequence ID" value="NP_116278.3"/>
</dbReference>
<dbReference type="UCSC" id="uc001sch.3">
    <molecule id="Q6N075-1"/>
    <property type="organism name" value="human"/>
</dbReference>
<dbReference type="AGR" id="HGNC:28156"/>
<dbReference type="CTD" id="84975"/>
<dbReference type="GeneCards" id="MFSD5"/>
<dbReference type="HGNC" id="HGNC:28156">
    <property type="gene designation" value="MFSD5"/>
</dbReference>
<dbReference type="HPA" id="ENSG00000182544">
    <property type="expression patterns" value="Low tissue specificity"/>
</dbReference>
<dbReference type="MIM" id="620345">
    <property type="type" value="gene"/>
</dbReference>
<dbReference type="neXtProt" id="NX_Q6N075"/>
<dbReference type="OpenTargets" id="ENSG00000182544"/>
<dbReference type="PharmGKB" id="PA142671466"/>
<dbReference type="VEuPathDB" id="HostDB:ENSG00000182544"/>
<dbReference type="eggNOG" id="KOG4332">
    <property type="taxonomic scope" value="Eukaryota"/>
</dbReference>
<dbReference type="GeneTree" id="ENSGT00390000012629"/>
<dbReference type="HOGENOM" id="CLU_034007_2_0_1"/>
<dbReference type="InParanoid" id="Q6N075"/>
<dbReference type="OrthoDB" id="263957at2759"/>
<dbReference type="PAN-GO" id="Q6N075">
    <property type="GO annotations" value="0 GO annotations based on evolutionary models"/>
</dbReference>
<dbReference type="PhylomeDB" id="Q6N075"/>
<dbReference type="TreeFam" id="TF328562"/>
<dbReference type="PathwayCommons" id="Q6N075"/>
<dbReference type="SignaLink" id="Q6N075"/>
<dbReference type="BioGRID-ORCS" id="84975">
    <property type="hits" value="15 hits in 1157 CRISPR screens"/>
</dbReference>
<dbReference type="ChiTaRS" id="MFSD5">
    <property type="organism name" value="human"/>
</dbReference>
<dbReference type="GenomeRNAi" id="84975"/>
<dbReference type="Pharos" id="Q6N075">
    <property type="development level" value="Tdark"/>
</dbReference>
<dbReference type="PRO" id="PR:Q6N075"/>
<dbReference type="Proteomes" id="UP000005640">
    <property type="component" value="Chromosome 12"/>
</dbReference>
<dbReference type="RNAct" id="Q6N075">
    <property type="molecule type" value="protein"/>
</dbReference>
<dbReference type="Bgee" id="ENSG00000182544">
    <property type="expression patterns" value="Expressed in lower esophagus mucosa and 184 other cell types or tissues"/>
</dbReference>
<dbReference type="ExpressionAtlas" id="Q6N075">
    <property type="expression patterns" value="baseline and differential"/>
</dbReference>
<dbReference type="GO" id="GO:0016020">
    <property type="term" value="C:membrane"/>
    <property type="evidence" value="ECO:0007005"/>
    <property type="project" value="UniProtKB"/>
</dbReference>
<dbReference type="GO" id="GO:0005886">
    <property type="term" value="C:plasma membrane"/>
    <property type="evidence" value="ECO:0007669"/>
    <property type="project" value="UniProtKB-SubCell"/>
</dbReference>
<dbReference type="GO" id="GO:0015098">
    <property type="term" value="F:molybdate ion transmembrane transporter activity"/>
    <property type="evidence" value="ECO:0000314"/>
    <property type="project" value="UniProtKB"/>
</dbReference>
<dbReference type="GO" id="GO:0015689">
    <property type="term" value="P:molybdate ion transport"/>
    <property type="evidence" value="ECO:0000314"/>
    <property type="project" value="UniProtKB"/>
</dbReference>
<dbReference type="GO" id="GO:0006811">
    <property type="term" value="P:monoatomic ion transport"/>
    <property type="evidence" value="ECO:0007669"/>
    <property type="project" value="UniProtKB-KW"/>
</dbReference>
<dbReference type="CDD" id="cd17487">
    <property type="entry name" value="MFS_MFSD5_like"/>
    <property type="match status" value="1"/>
</dbReference>
<dbReference type="FunFam" id="1.20.1250.20:FF:000192">
    <property type="entry name" value="Major facilitator superfamily domain-containing 5"/>
    <property type="match status" value="1"/>
</dbReference>
<dbReference type="Gene3D" id="1.20.1250.20">
    <property type="entry name" value="MFS general substrate transporter like domains"/>
    <property type="match status" value="1"/>
</dbReference>
<dbReference type="InterPro" id="IPR036259">
    <property type="entry name" value="MFS_trans_sf"/>
</dbReference>
<dbReference type="InterPro" id="IPR008509">
    <property type="entry name" value="MOT2/MFSD5"/>
</dbReference>
<dbReference type="PANTHER" id="PTHR23516:SF1">
    <property type="entry name" value="MOLYBDATE-ANION TRANSPORTER"/>
    <property type="match status" value="1"/>
</dbReference>
<dbReference type="PANTHER" id="PTHR23516">
    <property type="entry name" value="SAM (S-ADENOSYL METHIONINE) TRANSPORTER"/>
    <property type="match status" value="1"/>
</dbReference>
<dbReference type="Pfam" id="PF05631">
    <property type="entry name" value="MFS_5"/>
    <property type="match status" value="1"/>
</dbReference>
<dbReference type="SUPFAM" id="SSF103473">
    <property type="entry name" value="MFS general substrate transporter"/>
    <property type="match status" value="1"/>
</dbReference>
<gene>
    <name type="primary">MFSD5</name>
    <name type="ORF">UNQ832/PRO1759</name>
</gene>
<reference key="1">
    <citation type="journal article" date="2003" name="Genome Res.">
        <title>The secreted protein discovery initiative (SPDI), a large-scale effort to identify novel human secreted and transmembrane proteins: a bioinformatics assessment.</title>
        <authorList>
            <person name="Clark H.F."/>
            <person name="Gurney A.L."/>
            <person name="Abaya E."/>
            <person name="Baker K."/>
            <person name="Baldwin D.T."/>
            <person name="Brush J."/>
            <person name="Chen J."/>
            <person name="Chow B."/>
            <person name="Chui C."/>
            <person name="Crowley C."/>
            <person name="Currell B."/>
            <person name="Deuel B."/>
            <person name="Dowd P."/>
            <person name="Eaton D."/>
            <person name="Foster J.S."/>
            <person name="Grimaldi C."/>
            <person name="Gu Q."/>
            <person name="Hass P.E."/>
            <person name="Heldens S."/>
            <person name="Huang A."/>
            <person name="Kim H.S."/>
            <person name="Klimowski L."/>
            <person name="Jin Y."/>
            <person name="Johnson S."/>
            <person name="Lee J."/>
            <person name="Lewis L."/>
            <person name="Liao D."/>
            <person name="Mark M.R."/>
            <person name="Robbie E."/>
            <person name="Sanchez C."/>
            <person name="Schoenfeld J."/>
            <person name="Seshagiri S."/>
            <person name="Simmons L."/>
            <person name="Singh J."/>
            <person name="Smith V."/>
            <person name="Stinson J."/>
            <person name="Vagts A."/>
            <person name="Vandlen R.L."/>
            <person name="Watanabe C."/>
            <person name="Wieand D."/>
            <person name="Woods K."/>
            <person name="Xie M.-H."/>
            <person name="Yansura D.G."/>
            <person name="Yi S."/>
            <person name="Yu G."/>
            <person name="Yuan J."/>
            <person name="Zhang M."/>
            <person name="Zhang Z."/>
            <person name="Goddard A.D."/>
            <person name="Wood W.I."/>
            <person name="Godowski P.J."/>
            <person name="Gray A.M."/>
        </authorList>
    </citation>
    <scope>NUCLEOTIDE SEQUENCE [LARGE SCALE MRNA] (ISOFORM 1)</scope>
</reference>
<reference key="2">
    <citation type="journal article" date="2007" name="BMC Genomics">
        <title>The full-ORF clone resource of the German cDNA consortium.</title>
        <authorList>
            <person name="Bechtel S."/>
            <person name="Rosenfelder H."/>
            <person name="Duda A."/>
            <person name="Schmidt C.P."/>
            <person name="Ernst U."/>
            <person name="Wellenreuther R."/>
            <person name="Mehrle A."/>
            <person name="Schuster C."/>
            <person name="Bahr A."/>
            <person name="Bloecker H."/>
            <person name="Heubner D."/>
            <person name="Hoerlein A."/>
            <person name="Michel G."/>
            <person name="Wedler H."/>
            <person name="Koehrer K."/>
            <person name="Ottenwaelder B."/>
            <person name="Poustka A."/>
            <person name="Wiemann S."/>
            <person name="Schupp I."/>
        </authorList>
    </citation>
    <scope>NUCLEOTIDE SEQUENCE [LARGE SCALE MRNA] (ISOFORM 1)</scope>
    <source>
        <tissue>Colon endothelium</tissue>
    </source>
</reference>
<reference key="3">
    <citation type="journal article" date="2004" name="Nat. Genet.">
        <title>Complete sequencing and characterization of 21,243 full-length human cDNAs.</title>
        <authorList>
            <person name="Ota T."/>
            <person name="Suzuki Y."/>
            <person name="Nishikawa T."/>
            <person name="Otsuki T."/>
            <person name="Sugiyama T."/>
            <person name="Irie R."/>
            <person name="Wakamatsu A."/>
            <person name="Hayashi K."/>
            <person name="Sato H."/>
            <person name="Nagai K."/>
            <person name="Kimura K."/>
            <person name="Makita H."/>
            <person name="Sekine M."/>
            <person name="Obayashi M."/>
            <person name="Nishi T."/>
            <person name="Shibahara T."/>
            <person name="Tanaka T."/>
            <person name="Ishii S."/>
            <person name="Yamamoto J."/>
            <person name="Saito K."/>
            <person name="Kawai Y."/>
            <person name="Isono Y."/>
            <person name="Nakamura Y."/>
            <person name="Nagahari K."/>
            <person name="Murakami K."/>
            <person name="Yasuda T."/>
            <person name="Iwayanagi T."/>
            <person name="Wagatsuma M."/>
            <person name="Shiratori A."/>
            <person name="Sudo H."/>
            <person name="Hosoiri T."/>
            <person name="Kaku Y."/>
            <person name="Kodaira H."/>
            <person name="Kondo H."/>
            <person name="Sugawara M."/>
            <person name="Takahashi M."/>
            <person name="Kanda K."/>
            <person name="Yokoi T."/>
            <person name="Furuya T."/>
            <person name="Kikkawa E."/>
            <person name="Omura Y."/>
            <person name="Abe K."/>
            <person name="Kamihara K."/>
            <person name="Katsuta N."/>
            <person name="Sato K."/>
            <person name="Tanikawa M."/>
            <person name="Yamazaki M."/>
            <person name="Ninomiya K."/>
            <person name="Ishibashi T."/>
            <person name="Yamashita H."/>
            <person name="Murakawa K."/>
            <person name="Fujimori K."/>
            <person name="Tanai H."/>
            <person name="Kimata M."/>
            <person name="Watanabe M."/>
            <person name="Hiraoka S."/>
            <person name="Chiba Y."/>
            <person name="Ishida S."/>
            <person name="Ono Y."/>
            <person name="Takiguchi S."/>
            <person name="Watanabe S."/>
            <person name="Yosida M."/>
            <person name="Hotuta T."/>
            <person name="Kusano J."/>
            <person name="Kanehori K."/>
            <person name="Takahashi-Fujii A."/>
            <person name="Hara H."/>
            <person name="Tanase T.-O."/>
            <person name="Nomura Y."/>
            <person name="Togiya S."/>
            <person name="Komai F."/>
            <person name="Hara R."/>
            <person name="Takeuchi K."/>
            <person name="Arita M."/>
            <person name="Imose N."/>
            <person name="Musashino K."/>
            <person name="Yuuki H."/>
            <person name="Oshima A."/>
            <person name="Sasaki N."/>
            <person name="Aotsuka S."/>
            <person name="Yoshikawa Y."/>
            <person name="Matsunawa H."/>
            <person name="Ichihara T."/>
            <person name="Shiohata N."/>
            <person name="Sano S."/>
            <person name="Moriya S."/>
            <person name="Momiyama H."/>
            <person name="Satoh N."/>
            <person name="Takami S."/>
            <person name="Terashima Y."/>
            <person name="Suzuki O."/>
            <person name="Nakagawa S."/>
            <person name="Senoh A."/>
            <person name="Mizoguchi H."/>
            <person name="Goto Y."/>
            <person name="Shimizu F."/>
            <person name="Wakebe H."/>
            <person name="Hishigaki H."/>
            <person name="Watanabe T."/>
            <person name="Sugiyama A."/>
            <person name="Takemoto M."/>
            <person name="Kawakami B."/>
            <person name="Yamazaki M."/>
            <person name="Watanabe K."/>
            <person name="Kumagai A."/>
            <person name="Itakura S."/>
            <person name="Fukuzumi Y."/>
            <person name="Fujimori Y."/>
            <person name="Komiyama M."/>
            <person name="Tashiro H."/>
            <person name="Tanigami A."/>
            <person name="Fujiwara T."/>
            <person name="Ono T."/>
            <person name="Yamada K."/>
            <person name="Fujii Y."/>
            <person name="Ozaki K."/>
            <person name="Hirao M."/>
            <person name="Ohmori Y."/>
            <person name="Kawabata A."/>
            <person name="Hikiji T."/>
            <person name="Kobatake N."/>
            <person name="Inagaki H."/>
            <person name="Ikema Y."/>
            <person name="Okamoto S."/>
            <person name="Okitani R."/>
            <person name="Kawakami T."/>
            <person name="Noguchi S."/>
            <person name="Itoh T."/>
            <person name="Shigeta K."/>
            <person name="Senba T."/>
            <person name="Matsumura K."/>
            <person name="Nakajima Y."/>
            <person name="Mizuno T."/>
            <person name="Morinaga M."/>
            <person name="Sasaki M."/>
            <person name="Togashi T."/>
            <person name="Oyama M."/>
            <person name="Hata H."/>
            <person name="Watanabe M."/>
            <person name="Komatsu T."/>
            <person name="Mizushima-Sugano J."/>
            <person name="Satoh T."/>
            <person name="Shirai Y."/>
            <person name="Takahashi Y."/>
            <person name="Nakagawa K."/>
            <person name="Okumura K."/>
            <person name="Nagase T."/>
            <person name="Nomura N."/>
            <person name="Kikuchi H."/>
            <person name="Masuho Y."/>
            <person name="Yamashita R."/>
            <person name="Nakai K."/>
            <person name="Yada T."/>
            <person name="Nakamura Y."/>
            <person name="Ohara O."/>
            <person name="Isogai T."/>
            <person name="Sugano S."/>
        </authorList>
    </citation>
    <scope>NUCLEOTIDE SEQUENCE [LARGE SCALE MRNA] (ISOFORM 1)</scope>
    <source>
        <tissue>Testis</tissue>
    </source>
</reference>
<reference key="4">
    <citation type="journal article" date="2005" name="DNA Res.">
        <title>Signal sequence and keyword trap in silico for selection of full-length human cDNAs encoding secretion or membrane proteins from oligo-capped cDNA libraries.</title>
        <authorList>
            <person name="Otsuki T."/>
            <person name="Ota T."/>
            <person name="Nishikawa T."/>
            <person name="Hayashi K."/>
            <person name="Suzuki Y."/>
            <person name="Yamamoto J."/>
            <person name="Wakamatsu A."/>
            <person name="Kimura K."/>
            <person name="Sakamoto K."/>
            <person name="Hatano N."/>
            <person name="Kawai Y."/>
            <person name="Ishii S."/>
            <person name="Saito K."/>
            <person name="Kojima S."/>
            <person name="Sugiyama T."/>
            <person name="Ono T."/>
            <person name="Okano K."/>
            <person name="Yoshikawa Y."/>
            <person name="Aotsuka S."/>
            <person name="Sasaki N."/>
            <person name="Hattori A."/>
            <person name="Okumura K."/>
            <person name="Nagai K."/>
            <person name="Sugano S."/>
            <person name="Isogai T."/>
        </authorList>
    </citation>
    <scope>NUCLEOTIDE SEQUENCE [LARGE SCALE MRNA] (ISOFORM 1)</scope>
    <source>
        <tissue>Mammary gland</tissue>
    </source>
</reference>
<reference key="5">
    <citation type="journal article" date="2006" name="Nature">
        <title>The finished DNA sequence of human chromosome 12.</title>
        <authorList>
            <person name="Scherer S.E."/>
            <person name="Muzny D.M."/>
            <person name="Buhay C.J."/>
            <person name="Chen R."/>
            <person name="Cree A."/>
            <person name="Ding Y."/>
            <person name="Dugan-Rocha S."/>
            <person name="Gill R."/>
            <person name="Gunaratne P."/>
            <person name="Harris R.A."/>
            <person name="Hawes A.C."/>
            <person name="Hernandez J."/>
            <person name="Hodgson A.V."/>
            <person name="Hume J."/>
            <person name="Jackson A."/>
            <person name="Khan Z.M."/>
            <person name="Kovar-Smith C."/>
            <person name="Lewis L.R."/>
            <person name="Lozado R.J."/>
            <person name="Metzker M.L."/>
            <person name="Milosavljevic A."/>
            <person name="Miner G.R."/>
            <person name="Montgomery K.T."/>
            <person name="Morgan M.B."/>
            <person name="Nazareth L.V."/>
            <person name="Scott G."/>
            <person name="Sodergren E."/>
            <person name="Song X.-Z."/>
            <person name="Steffen D."/>
            <person name="Lovering R.C."/>
            <person name="Wheeler D.A."/>
            <person name="Worley K.C."/>
            <person name="Yuan Y."/>
            <person name="Zhang Z."/>
            <person name="Adams C.Q."/>
            <person name="Ansari-Lari M.A."/>
            <person name="Ayele M."/>
            <person name="Brown M.J."/>
            <person name="Chen G."/>
            <person name="Chen Z."/>
            <person name="Clerc-Blankenburg K.P."/>
            <person name="Davis C."/>
            <person name="Delgado O."/>
            <person name="Dinh H.H."/>
            <person name="Draper H."/>
            <person name="Gonzalez-Garay M.L."/>
            <person name="Havlak P."/>
            <person name="Jackson L.R."/>
            <person name="Jacob L.S."/>
            <person name="Kelly S.H."/>
            <person name="Li L."/>
            <person name="Li Z."/>
            <person name="Liu J."/>
            <person name="Liu W."/>
            <person name="Lu J."/>
            <person name="Maheshwari M."/>
            <person name="Nguyen B.-V."/>
            <person name="Okwuonu G.O."/>
            <person name="Pasternak S."/>
            <person name="Perez L.M."/>
            <person name="Plopper F.J.H."/>
            <person name="Santibanez J."/>
            <person name="Shen H."/>
            <person name="Tabor P.E."/>
            <person name="Verduzco D."/>
            <person name="Waldron L."/>
            <person name="Wang Q."/>
            <person name="Williams G.A."/>
            <person name="Zhang J."/>
            <person name="Zhou J."/>
            <person name="Allen C.C."/>
            <person name="Amin A.G."/>
            <person name="Anyalebechi V."/>
            <person name="Bailey M."/>
            <person name="Barbaria J.A."/>
            <person name="Bimage K.E."/>
            <person name="Bryant N.P."/>
            <person name="Burch P.E."/>
            <person name="Burkett C.E."/>
            <person name="Burrell K.L."/>
            <person name="Calderon E."/>
            <person name="Cardenas V."/>
            <person name="Carter K."/>
            <person name="Casias K."/>
            <person name="Cavazos I."/>
            <person name="Cavazos S.R."/>
            <person name="Ceasar H."/>
            <person name="Chacko J."/>
            <person name="Chan S.N."/>
            <person name="Chavez D."/>
            <person name="Christopoulos C."/>
            <person name="Chu J."/>
            <person name="Cockrell R."/>
            <person name="Cox C.D."/>
            <person name="Dang M."/>
            <person name="Dathorne S.R."/>
            <person name="David R."/>
            <person name="Davis C.M."/>
            <person name="Davy-Carroll L."/>
            <person name="Deshazo D.R."/>
            <person name="Donlin J.E."/>
            <person name="D'Souza L."/>
            <person name="Eaves K.A."/>
            <person name="Egan A."/>
            <person name="Emery-Cohen A.J."/>
            <person name="Escotto M."/>
            <person name="Flagg N."/>
            <person name="Forbes L.D."/>
            <person name="Gabisi A.M."/>
            <person name="Garza M."/>
            <person name="Hamilton C."/>
            <person name="Henderson N."/>
            <person name="Hernandez O."/>
            <person name="Hines S."/>
            <person name="Hogues M.E."/>
            <person name="Huang M."/>
            <person name="Idlebird D.G."/>
            <person name="Johnson R."/>
            <person name="Jolivet A."/>
            <person name="Jones S."/>
            <person name="Kagan R."/>
            <person name="King L.M."/>
            <person name="Leal B."/>
            <person name="Lebow H."/>
            <person name="Lee S."/>
            <person name="LeVan J.M."/>
            <person name="Lewis L.C."/>
            <person name="London P."/>
            <person name="Lorensuhewa L.M."/>
            <person name="Loulseged H."/>
            <person name="Lovett D.A."/>
            <person name="Lucier A."/>
            <person name="Lucier R.L."/>
            <person name="Ma J."/>
            <person name="Madu R.C."/>
            <person name="Mapua P."/>
            <person name="Martindale A.D."/>
            <person name="Martinez E."/>
            <person name="Massey E."/>
            <person name="Mawhiney S."/>
            <person name="Meador M.G."/>
            <person name="Mendez S."/>
            <person name="Mercado C."/>
            <person name="Mercado I.C."/>
            <person name="Merritt C.E."/>
            <person name="Miner Z.L."/>
            <person name="Minja E."/>
            <person name="Mitchell T."/>
            <person name="Mohabbat F."/>
            <person name="Mohabbat K."/>
            <person name="Montgomery B."/>
            <person name="Moore N."/>
            <person name="Morris S."/>
            <person name="Munidasa M."/>
            <person name="Ngo R.N."/>
            <person name="Nguyen N.B."/>
            <person name="Nickerson E."/>
            <person name="Nwaokelemeh O.O."/>
            <person name="Nwokenkwo S."/>
            <person name="Obregon M."/>
            <person name="Oguh M."/>
            <person name="Oragunye N."/>
            <person name="Oviedo R.J."/>
            <person name="Parish B.J."/>
            <person name="Parker D.N."/>
            <person name="Parrish J."/>
            <person name="Parks K.L."/>
            <person name="Paul H.A."/>
            <person name="Payton B.A."/>
            <person name="Perez A."/>
            <person name="Perrin W."/>
            <person name="Pickens A."/>
            <person name="Primus E.L."/>
            <person name="Pu L.-L."/>
            <person name="Puazo M."/>
            <person name="Quiles M.M."/>
            <person name="Quiroz J.B."/>
            <person name="Rabata D."/>
            <person name="Reeves K."/>
            <person name="Ruiz S.J."/>
            <person name="Shao H."/>
            <person name="Sisson I."/>
            <person name="Sonaike T."/>
            <person name="Sorelle R.P."/>
            <person name="Sutton A.E."/>
            <person name="Svatek A.F."/>
            <person name="Svetz L.A."/>
            <person name="Tamerisa K.S."/>
            <person name="Taylor T.R."/>
            <person name="Teague B."/>
            <person name="Thomas N."/>
            <person name="Thorn R.D."/>
            <person name="Trejos Z.Y."/>
            <person name="Trevino B.K."/>
            <person name="Ukegbu O.N."/>
            <person name="Urban J.B."/>
            <person name="Vasquez L.I."/>
            <person name="Vera V.A."/>
            <person name="Villasana D.M."/>
            <person name="Wang L."/>
            <person name="Ward-Moore S."/>
            <person name="Warren J.T."/>
            <person name="Wei X."/>
            <person name="White F."/>
            <person name="Williamson A.L."/>
            <person name="Wleczyk R."/>
            <person name="Wooden H.S."/>
            <person name="Wooden S.H."/>
            <person name="Yen J."/>
            <person name="Yoon L."/>
            <person name="Yoon V."/>
            <person name="Zorrilla S.E."/>
            <person name="Nelson D."/>
            <person name="Kucherlapati R."/>
            <person name="Weinstock G."/>
            <person name="Gibbs R.A."/>
        </authorList>
    </citation>
    <scope>NUCLEOTIDE SEQUENCE [LARGE SCALE GENOMIC DNA]</scope>
</reference>
<reference key="6">
    <citation type="submission" date="2005-07" db="EMBL/GenBank/DDBJ databases">
        <authorList>
            <person name="Mural R.J."/>
            <person name="Istrail S."/>
            <person name="Sutton G.G."/>
            <person name="Florea L."/>
            <person name="Halpern A.L."/>
            <person name="Mobarry C.M."/>
            <person name="Lippert R."/>
            <person name="Walenz B."/>
            <person name="Shatkay H."/>
            <person name="Dew I."/>
            <person name="Miller J.R."/>
            <person name="Flanigan M.J."/>
            <person name="Edwards N.J."/>
            <person name="Bolanos R."/>
            <person name="Fasulo D."/>
            <person name="Halldorsson B.V."/>
            <person name="Hannenhalli S."/>
            <person name="Turner R."/>
            <person name="Yooseph S."/>
            <person name="Lu F."/>
            <person name="Nusskern D.R."/>
            <person name="Shue B.C."/>
            <person name="Zheng X.H."/>
            <person name="Zhong F."/>
            <person name="Delcher A.L."/>
            <person name="Huson D.H."/>
            <person name="Kravitz S.A."/>
            <person name="Mouchard L."/>
            <person name="Reinert K."/>
            <person name="Remington K.A."/>
            <person name="Clark A.G."/>
            <person name="Waterman M.S."/>
            <person name="Eichler E.E."/>
            <person name="Adams M.D."/>
            <person name="Hunkapiller M.W."/>
            <person name="Myers E.W."/>
            <person name="Venter J.C."/>
        </authorList>
    </citation>
    <scope>NUCLEOTIDE SEQUENCE [LARGE SCALE GENOMIC DNA]</scope>
</reference>
<reference key="7">
    <citation type="journal article" date="2004" name="Genome Res.">
        <title>The status, quality, and expansion of the NIH full-length cDNA project: the Mammalian Gene Collection (MGC).</title>
        <authorList>
            <consortium name="The MGC Project Team"/>
        </authorList>
    </citation>
    <scope>NUCLEOTIDE SEQUENCE [LARGE SCALE MRNA] (ISOFORM 1)</scope>
    <source>
        <tissue>Brain</tissue>
        <tissue>Ovary</tissue>
    </source>
</reference>
<reference key="8">
    <citation type="journal article" date="2011" name="Gene">
        <title>Long evolutionary conservation and considerable tissue specificity of several atypical solute carrier transporters.</title>
        <authorList>
            <person name="Sreedharan S."/>
            <person name="Stephansson O."/>
            <person name="Schioth H.B."/>
            <person name="Fredriksson R."/>
        </authorList>
    </citation>
    <scope>TISSUE SPECIFICITY</scope>
</reference>
<reference key="9">
    <citation type="journal article" date="2011" name="Proc. Natl. Acad. Sci. U.S.A.">
        <title>Algae and humans share a molybdate transporter.</title>
        <authorList>
            <person name="Tejada-Jimenez M."/>
            <person name="Galvan A."/>
            <person name="Fernandez E."/>
        </authorList>
    </citation>
    <scope>FUNCTION</scope>
    <scope>BIOPHYSICOCHEMICAL PROPERTIES</scope>
</reference>
<name>MFSD5_HUMAN</name>
<proteinExistence type="evidence at protein level"/>